<sequence>MRLLQLLFRASPATLLLVLCLQLGANKAQDNTRKIIIKDFDIPKSVRPNEEVTATLAVQTELKECMVVKTYLISSVPLEGGFNYKYTACLCNENPKTFYWDFYTNRTVRIAAVVDVIRELGICPDDAAVIPIKNNRFYTIETLEVE</sequence>
<name>PIP_SYMSY</name>
<reference key="1">
    <citation type="journal article" date="2006" name="Gene">
        <title>Origin and evolution of gene for prolactin-induced protein.</title>
        <authorList>
            <person name="Kitano T."/>
            <person name="Tian W."/>
            <person name="Umetsu K."/>
            <person name="Yuasa I."/>
            <person name="Yamazaki K."/>
            <person name="Saitou N."/>
            <person name="Osawa M."/>
        </authorList>
    </citation>
    <scope>NUCLEOTIDE SEQUENCE [GENOMIC DNA]</scope>
    <source>
        <strain>Isolate T007</strain>
    </source>
</reference>
<dbReference type="EMBL" id="AB251905">
    <property type="protein sequence ID" value="BAF35625.1"/>
    <property type="molecule type" value="Genomic_DNA"/>
</dbReference>
<dbReference type="RefSeq" id="XP_055140309.1">
    <property type="nucleotide sequence ID" value="XM_055284334.1"/>
</dbReference>
<dbReference type="SMR" id="A0A889"/>
<dbReference type="GlyCosmos" id="A0A889">
    <property type="glycosylation" value="1 site, No reported glycans"/>
</dbReference>
<dbReference type="GeneID" id="129485135"/>
<dbReference type="GO" id="GO:0005615">
    <property type="term" value="C:extracellular space"/>
    <property type="evidence" value="ECO:0007669"/>
    <property type="project" value="TreeGrafter"/>
</dbReference>
<dbReference type="GO" id="GO:0004190">
    <property type="term" value="F:aspartic-type endopeptidase activity"/>
    <property type="evidence" value="ECO:0007669"/>
    <property type="project" value="TreeGrafter"/>
</dbReference>
<dbReference type="GO" id="GO:0006508">
    <property type="term" value="P:proteolysis"/>
    <property type="evidence" value="ECO:0007669"/>
    <property type="project" value="TreeGrafter"/>
</dbReference>
<dbReference type="GO" id="GO:0002682">
    <property type="term" value="P:regulation of immune system process"/>
    <property type="evidence" value="ECO:0007669"/>
    <property type="project" value="TreeGrafter"/>
</dbReference>
<dbReference type="FunFam" id="2.60.40.10:FF:001572">
    <property type="entry name" value="Prolactin-inducible protein homolog"/>
    <property type="match status" value="1"/>
</dbReference>
<dbReference type="Gene3D" id="2.60.40.10">
    <property type="entry name" value="Immunoglobulins"/>
    <property type="match status" value="1"/>
</dbReference>
<dbReference type="InterPro" id="IPR013783">
    <property type="entry name" value="Ig-like_fold"/>
</dbReference>
<dbReference type="InterPro" id="IPR014756">
    <property type="entry name" value="Ig_E-set"/>
</dbReference>
<dbReference type="InterPro" id="IPR007990">
    <property type="entry name" value="PIP"/>
</dbReference>
<dbReference type="PANTHER" id="PTHR15096:SF5">
    <property type="entry name" value="PROLACTIN-INDUCIBLE PROTEIN"/>
    <property type="match status" value="1"/>
</dbReference>
<dbReference type="PANTHER" id="PTHR15096">
    <property type="entry name" value="PROLACTIN-INDUCIBLE PROTEIN/SEMINAL VESICLE ANTIGEN"/>
    <property type="match status" value="1"/>
</dbReference>
<dbReference type="Pfam" id="PF05326">
    <property type="entry name" value="SVA"/>
    <property type="match status" value="1"/>
</dbReference>
<dbReference type="PIRSF" id="PIRSF002572">
    <property type="entry name" value="PIP-GCDFP-15"/>
    <property type="match status" value="1"/>
</dbReference>
<dbReference type="SUPFAM" id="SSF81296">
    <property type="entry name" value="E set domains"/>
    <property type="match status" value="1"/>
</dbReference>
<feature type="signal peptide" evidence="1">
    <location>
        <begin position="1"/>
        <end position="28"/>
    </location>
</feature>
<feature type="chain" id="PRO_0000273196" description="Prolactin-inducible protein homolog">
    <location>
        <begin position="29"/>
        <end position="146"/>
    </location>
</feature>
<feature type="modified residue" description="Pyrrolidone carboxylic acid" evidence="2">
    <location>
        <position position="29"/>
    </location>
</feature>
<feature type="glycosylation site" description="N-linked (GlcNAc...) asparagine" evidence="3">
    <location>
        <position position="105"/>
    </location>
</feature>
<feature type="disulfide bond" evidence="1">
    <location>
        <begin position="65"/>
        <end position="91"/>
    </location>
</feature>
<feature type="disulfide bond" evidence="1">
    <location>
        <begin position="89"/>
        <end position="123"/>
    </location>
</feature>
<evidence type="ECO:0000250" key="1"/>
<evidence type="ECO:0000250" key="2">
    <source>
        <dbReference type="UniProtKB" id="P12273"/>
    </source>
</evidence>
<evidence type="ECO:0000255" key="3"/>
<evidence type="ECO:0000305" key="4"/>
<organism>
    <name type="scientific">Symphalangus syndactylus</name>
    <name type="common">Siamang</name>
    <name type="synonym">Hylobates syndactylus</name>
    <dbReference type="NCBI Taxonomy" id="9590"/>
    <lineage>
        <taxon>Eukaryota</taxon>
        <taxon>Metazoa</taxon>
        <taxon>Chordata</taxon>
        <taxon>Craniata</taxon>
        <taxon>Vertebrata</taxon>
        <taxon>Euteleostomi</taxon>
        <taxon>Mammalia</taxon>
        <taxon>Eutheria</taxon>
        <taxon>Euarchontoglires</taxon>
        <taxon>Primates</taxon>
        <taxon>Haplorrhini</taxon>
        <taxon>Catarrhini</taxon>
        <taxon>Hylobatidae</taxon>
        <taxon>Symphalangus</taxon>
    </lineage>
</organism>
<keyword id="KW-1015">Disulfide bond</keyword>
<keyword id="KW-0325">Glycoprotein</keyword>
<keyword id="KW-0873">Pyrrolidone carboxylic acid</keyword>
<keyword id="KW-0964">Secreted</keyword>
<keyword id="KW-0732">Signal</keyword>
<comment type="subunit">
    <text evidence="1">Monomer. Interacts with AZGP1 (By similarity).</text>
</comment>
<comment type="subcellular location">
    <subcellularLocation>
        <location evidence="1">Secreted</location>
    </subcellularLocation>
</comment>
<comment type="similarity">
    <text evidence="4">Belongs to the PIP family.</text>
</comment>
<proteinExistence type="inferred from homology"/>
<accession>A0A889</accession>
<protein>
    <recommendedName>
        <fullName>Prolactin-inducible protein homolog</fullName>
    </recommendedName>
    <alternativeName>
        <fullName>Prolactin-induced protein</fullName>
    </alternativeName>
</protein>
<gene>
    <name type="primary">PIP</name>
</gene>